<accession>A8G4P2</accession>
<reference key="1">
    <citation type="journal article" date="2007" name="PLoS Genet.">
        <title>Patterns and implications of gene gain and loss in the evolution of Prochlorococcus.</title>
        <authorList>
            <person name="Kettler G.C."/>
            <person name="Martiny A.C."/>
            <person name="Huang K."/>
            <person name="Zucker J."/>
            <person name="Coleman M.L."/>
            <person name="Rodrigue S."/>
            <person name="Chen F."/>
            <person name="Lapidus A."/>
            <person name="Ferriera S."/>
            <person name="Johnson J."/>
            <person name="Steglich C."/>
            <person name="Church G.M."/>
            <person name="Richardson P."/>
            <person name="Chisholm S.W."/>
        </authorList>
    </citation>
    <scope>NUCLEOTIDE SEQUENCE [LARGE SCALE GENOMIC DNA]</scope>
    <source>
        <strain>MIT 9215</strain>
    </source>
</reference>
<dbReference type="EC" id="2.7.1.148" evidence="1"/>
<dbReference type="EMBL" id="CP000825">
    <property type="protein sequence ID" value="ABV50573.1"/>
    <property type="molecule type" value="Genomic_DNA"/>
</dbReference>
<dbReference type="RefSeq" id="WP_012007664.1">
    <property type="nucleotide sequence ID" value="NC_009840.1"/>
</dbReference>
<dbReference type="SMR" id="A8G4P2"/>
<dbReference type="STRING" id="93060.P9215_09581"/>
<dbReference type="KEGG" id="pmh:P9215_09581"/>
<dbReference type="eggNOG" id="COG1947">
    <property type="taxonomic scope" value="Bacteria"/>
</dbReference>
<dbReference type="HOGENOM" id="CLU_053057_1_1_3"/>
<dbReference type="OrthoDB" id="9809438at2"/>
<dbReference type="UniPathway" id="UPA00056">
    <property type="reaction ID" value="UER00094"/>
</dbReference>
<dbReference type="Proteomes" id="UP000002014">
    <property type="component" value="Chromosome"/>
</dbReference>
<dbReference type="GO" id="GO:0050515">
    <property type="term" value="F:4-(cytidine 5'-diphospho)-2-C-methyl-D-erythritol kinase activity"/>
    <property type="evidence" value="ECO:0007669"/>
    <property type="project" value="UniProtKB-UniRule"/>
</dbReference>
<dbReference type="GO" id="GO:0005524">
    <property type="term" value="F:ATP binding"/>
    <property type="evidence" value="ECO:0007669"/>
    <property type="project" value="UniProtKB-UniRule"/>
</dbReference>
<dbReference type="GO" id="GO:0019288">
    <property type="term" value="P:isopentenyl diphosphate biosynthetic process, methylerythritol 4-phosphate pathway"/>
    <property type="evidence" value="ECO:0007669"/>
    <property type="project" value="UniProtKB-UniRule"/>
</dbReference>
<dbReference type="GO" id="GO:0016114">
    <property type="term" value="P:terpenoid biosynthetic process"/>
    <property type="evidence" value="ECO:0007669"/>
    <property type="project" value="InterPro"/>
</dbReference>
<dbReference type="Gene3D" id="3.30.230.10">
    <property type="match status" value="1"/>
</dbReference>
<dbReference type="Gene3D" id="3.30.70.890">
    <property type="entry name" value="GHMP kinase, C-terminal domain"/>
    <property type="match status" value="1"/>
</dbReference>
<dbReference type="HAMAP" id="MF_00061">
    <property type="entry name" value="IspE"/>
    <property type="match status" value="1"/>
</dbReference>
<dbReference type="InterPro" id="IPR013750">
    <property type="entry name" value="GHMP_kinase_C_dom"/>
</dbReference>
<dbReference type="InterPro" id="IPR036554">
    <property type="entry name" value="GHMP_kinase_C_sf"/>
</dbReference>
<dbReference type="InterPro" id="IPR006204">
    <property type="entry name" value="GHMP_kinase_N_dom"/>
</dbReference>
<dbReference type="InterPro" id="IPR004424">
    <property type="entry name" value="IspE"/>
</dbReference>
<dbReference type="InterPro" id="IPR020568">
    <property type="entry name" value="Ribosomal_Su5_D2-typ_SF"/>
</dbReference>
<dbReference type="InterPro" id="IPR014721">
    <property type="entry name" value="Ribsml_uS5_D2-typ_fold_subgr"/>
</dbReference>
<dbReference type="NCBIfam" id="TIGR00154">
    <property type="entry name" value="ispE"/>
    <property type="match status" value="1"/>
</dbReference>
<dbReference type="PANTHER" id="PTHR43527">
    <property type="entry name" value="4-DIPHOSPHOCYTIDYL-2-C-METHYL-D-ERYTHRITOL KINASE, CHLOROPLASTIC"/>
    <property type="match status" value="1"/>
</dbReference>
<dbReference type="PANTHER" id="PTHR43527:SF2">
    <property type="entry name" value="4-DIPHOSPHOCYTIDYL-2-C-METHYL-D-ERYTHRITOL KINASE, CHLOROPLASTIC"/>
    <property type="match status" value="1"/>
</dbReference>
<dbReference type="Pfam" id="PF08544">
    <property type="entry name" value="GHMP_kinases_C"/>
    <property type="match status" value="1"/>
</dbReference>
<dbReference type="Pfam" id="PF00288">
    <property type="entry name" value="GHMP_kinases_N"/>
    <property type="match status" value="1"/>
</dbReference>
<dbReference type="PIRSF" id="PIRSF010376">
    <property type="entry name" value="IspE"/>
    <property type="match status" value="1"/>
</dbReference>
<dbReference type="SUPFAM" id="SSF55060">
    <property type="entry name" value="GHMP Kinase, C-terminal domain"/>
    <property type="match status" value="1"/>
</dbReference>
<dbReference type="SUPFAM" id="SSF54211">
    <property type="entry name" value="Ribosomal protein S5 domain 2-like"/>
    <property type="match status" value="1"/>
</dbReference>
<keyword id="KW-0067">ATP-binding</keyword>
<keyword id="KW-0414">Isoprene biosynthesis</keyword>
<keyword id="KW-0418">Kinase</keyword>
<keyword id="KW-0547">Nucleotide-binding</keyword>
<keyword id="KW-0808">Transferase</keyword>
<gene>
    <name evidence="1" type="primary">ispE</name>
    <name type="ordered locus">P9215_09581</name>
</gene>
<organism>
    <name type="scientific">Prochlorococcus marinus (strain MIT 9215)</name>
    <dbReference type="NCBI Taxonomy" id="93060"/>
    <lineage>
        <taxon>Bacteria</taxon>
        <taxon>Bacillati</taxon>
        <taxon>Cyanobacteriota</taxon>
        <taxon>Cyanophyceae</taxon>
        <taxon>Synechococcales</taxon>
        <taxon>Prochlorococcaceae</taxon>
        <taxon>Prochlorococcus</taxon>
    </lineage>
</organism>
<name>ISPE_PROM2</name>
<feature type="chain" id="PRO_1000057424" description="4-diphosphocytidyl-2-C-methyl-D-erythritol kinase">
    <location>
        <begin position="1"/>
        <end position="311"/>
    </location>
</feature>
<feature type="active site" evidence="1">
    <location>
        <position position="16"/>
    </location>
</feature>
<feature type="active site" evidence="1">
    <location>
        <position position="142"/>
    </location>
</feature>
<feature type="binding site" evidence="1">
    <location>
        <begin position="100"/>
        <end position="110"/>
    </location>
    <ligand>
        <name>ATP</name>
        <dbReference type="ChEBI" id="CHEBI:30616"/>
    </ligand>
</feature>
<proteinExistence type="inferred from homology"/>
<comment type="function">
    <text evidence="1">Catalyzes the phosphorylation of the position 2 hydroxy group of 4-diphosphocytidyl-2C-methyl-D-erythritol.</text>
</comment>
<comment type="catalytic activity">
    <reaction evidence="1">
        <text>4-CDP-2-C-methyl-D-erythritol + ATP = 4-CDP-2-C-methyl-D-erythritol 2-phosphate + ADP + H(+)</text>
        <dbReference type="Rhea" id="RHEA:18437"/>
        <dbReference type="ChEBI" id="CHEBI:15378"/>
        <dbReference type="ChEBI" id="CHEBI:30616"/>
        <dbReference type="ChEBI" id="CHEBI:57823"/>
        <dbReference type="ChEBI" id="CHEBI:57919"/>
        <dbReference type="ChEBI" id="CHEBI:456216"/>
        <dbReference type="EC" id="2.7.1.148"/>
    </reaction>
</comment>
<comment type="pathway">
    <text evidence="1">Isoprenoid biosynthesis; isopentenyl diphosphate biosynthesis via DXP pathway; isopentenyl diphosphate from 1-deoxy-D-xylulose 5-phosphate: step 3/6.</text>
</comment>
<comment type="similarity">
    <text evidence="1">Belongs to the GHMP kinase family. IspE subfamily.</text>
</comment>
<protein>
    <recommendedName>
        <fullName evidence="1">4-diphosphocytidyl-2-C-methyl-D-erythritol kinase</fullName>
        <shortName evidence="1">CMK</shortName>
        <ecNumber evidence="1">2.7.1.148</ecNumber>
    </recommendedName>
    <alternativeName>
        <fullName evidence="1">4-(cytidine-5'-diphospho)-2-C-methyl-D-erythritol kinase</fullName>
    </alternativeName>
</protein>
<sequence length="311" mass="34714">MQDLAGKKIIIKSPAKINLHLEVIGKREDGFHELAMIMQNIDLFDYLEFQINNEGLIKLESDCTDLSLSSDNLIVKSANLLRKKLNIDCGANIFLRKNIPIGAGLAGGSSNAAATLIGLNKLWDLNVDQKTLFSLASTLGSDIPFFINGGIQLCFGRGEILEKLDSNFDYGVILLKNPNVSVSTAETYSKYSNRFCYQYLTNGEMIENIRNNLRDNGLNNLNFDKQHLTIKNDLQLVVENDNDSVKEALYLLSKLENCLTFSMSGSGPTCFAIFKDIETAKKELNANSKLFEDKGYDAWVCTFFEKGITFI</sequence>
<evidence type="ECO:0000255" key="1">
    <source>
        <dbReference type="HAMAP-Rule" id="MF_00061"/>
    </source>
</evidence>